<organism>
    <name type="scientific">Homo sapiens</name>
    <name type="common">Human</name>
    <dbReference type="NCBI Taxonomy" id="9606"/>
    <lineage>
        <taxon>Eukaryota</taxon>
        <taxon>Metazoa</taxon>
        <taxon>Chordata</taxon>
        <taxon>Craniata</taxon>
        <taxon>Vertebrata</taxon>
        <taxon>Euteleostomi</taxon>
        <taxon>Mammalia</taxon>
        <taxon>Eutheria</taxon>
        <taxon>Euarchontoglires</taxon>
        <taxon>Primates</taxon>
        <taxon>Haplorrhini</taxon>
        <taxon>Catarrhini</taxon>
        <taxon>Hominidae</taxon>
        <taxon>Homo</taxon>
    </lineage>
</organism>
<name>HGB1A_HUMAN</name>
<evidence type="ECO:0000250" key="1"/>
<evidence type="ECO:0000250" key="2">
    <source>
        <dbReference type="UniProtKB" id="P10103"/>
    </source>
</evidence>
<evidence type="ECO:0000255" key="3">
    <source>
        <dbReference type="PROSITE-ProRule" id="PRU00267"/>
    </source>
</evidence>
<evidence type="ECO:0000256" key="4">
    <source>
        <dbReference type="SAM" id="MobiDB-lite"/>
    </source>
</evidence>
<evidence type="ECO:0000305" key="5"/>
<sequence>MGKGDPKKPRGKMSSYAFFVQTCREEHKKKHSDASVNFSEFSNKCSERWKTMSAKEKGKFEDMAKADKTHYERQMKTYIPPKGETKKKFKDPNAPKRPPSAFFLFCSEYHPKIKGEHPGLSIGDVAKKLGEMWNNTAADDKQPGEKKAAKLKEKYEKDIAAYQAKGKPEAAKKGVVKAEKSKKKKEEEEDEEDEEDEEEEDEEDEEDDDDE</sequence>
<reference key="1">
    <citation type="journal article" date="2001" name="Nature">
        <title>The DNA sequence and comparative analysis of human chromosome 20.</title>
        <authorList>
            <person name="Deloukas P."/>
            <person name="Matthews L.H."/>
            <person name="Ashurst J.L."/>
            <person name="Burton J."/>
            <person name="Gilbert J.G.R."/>
            <person name="Jones M."/>
            <person name="Stavrides G."/>
            <person name="Almeida J.P."/>
            <person name="Babbage A.K."/>
            <person name="Bagguley C.L."/>
            <person name="Bailey J."/>
            <person name="Barlow K.F."/>
            <person name="Bates K.N."/>
            <person name="Beard L.M."/>
            <person name="Beare D.M."/>
            <person name="Beasley O.P."/>
            <person name="Bird C.P."/>
            <person name="Blakey S.E."/>
            <person name="Bridgeman A.M."/>
            <person name="Brown A.J."/>
            <person name="Buck D."/>
            <person name="Burrill W.D."/>
            <person name="Butler A.P."/>
            <person name="Carder C."/>
            <person name="Carter N.P."/>
            <person name="Chapman J.C."/>
            <person name="Clamp M."/>
            <person name="Clark G."/>
            <person name="Clark L.N."/>
            <person name="Clark S.Y."/>
            <person name="Clee C.M."/>
            <person name="Clegg S."/>
            <person name="Cobley V.E."/>
            <person name="Collier R.E."/>
            <person name="Connor R.E."/>
            <person name="Corby N.R."/>
            <person name="Coulson A."/>
            <person name="Coville G.J."/>
            <person name="Deadman R."/>
            <person name="Dhami P.D."/>
            <person name="Dunn M."/>
            <person name="Ellington A.G."/>
            <person name="Frankland J.A."/>
            <person name="Fraser A."/>
            <person name="French L."/>
            <person name="Garner P."/>
            <person name="Grafham D.V."/>
            <person name="Griffiths C."/>
            <person name="Griffiths M.N.D."/>
            <person name="Gwilliam R."/>
            <person name="Hall R.E."/>
            <person name="Hammond S."/>
            <person name="Harley J.L."/>
            <person name="Heath P.D."/>
            <person name="Ho S."/>
            <person name="Holden J.L."/>
            <person name="Howden P.J."/>
            <person name="Huckle E."/>
            <person name="Hunt A.R."/>
            <person name="Hunt S.E."/>
            <person name="Jekosch K."/>
            <person name="Johnson C.M."/>
            <person name="Johnson D."/>
            <person name="Kay M.P."/>
            <person name="Kimberley A.M."/>
            <person name="King A."/>
            <person name="Knights A."/>
            <person name="Laird G.K."/>
            <person name="Lawlor S."/>
            <person name="Lehvaeslaiho M.H."/>
            <person name="Leversha M.A."/>
            <person name="Lloyd C."/>
            <person name="Lloyd D.M."/>
            <person name="Lovell J.D."/>
            <person name="Marsh V.L."/>
            <person name="Martin S.L."/>
            <person name="McConnachie L.J."/>
            <person name="McLay K."/>
            <person name="McMurray A.A."/>
            <person name="Milne S.A."/>
            <person name="Mistry D."/>
            <person name="Moore M.J.F."/>
            <person name="Mullikin J.C."/>
            <person name="Nickerson T."/>
            <person name="Oliver K."/>
            <person name="Parker A."/>
            <person name="Patel R."/>
            <person name="Pearce T.A.V."/>
            <person name="Peck A.I."/>
            <person name="Phillimore B.J.C.T."/>
            <person name="Prathalingam S.R."/>
            <person name="Plumb R.W."/>
            <person name="Ramsay H."/>
            <person name="Rice C.M."/>
            <person name="Ross M.T."/>
            <person name="Scott C.E."/>
            <person name="Sehra H.K."/>
            <person name="Shownkeen R."/>
            <person name="Sims S."/>
            <person name="Skuce C.D."/>
            <person name="Smith M.L."/>
            <person name="Soderlund C."/>
            <person name="Steward C.A."/>
            <person name="Sulston J.E."/>
            <person name="Swann R.M."/>
            <person name="Sycamore N."/>
            <person name="Taylor R."/>
            <person name="Tee L."/>
            <person name="Thomas D.W."/>
            <person name="Thorpe A."/>
            <person name="Tracey A."/>
            <person name="Tromans A.C."/>
            <person name="Vaudin M."/>
            <person name="Wall M."/>
            <person name="Wallis J.M."/>
            <person name="Whitehead S.L."/>
            <person name="Whittaker P."/>
            <person name="Willey D.L."/>
            <person name="Williams L."/>
            <person name="Williams S.A."/>
            <person name="Wilming L."/>
            <person name="Wray P.W."/>
            <person name="Hubbard T."/>
            <person name="Durbin R.M."/>
            <person name="Bentley D.R."/>
            <person name="Beck S."/>
            <person name="Rogers J."/>
        </authorList>
    </citation>
    <scope>NUCLEOTIDE SEQUENCE [LARGE SCALE GENOMIC DNA]</scope>
</reference>
<reference key="2">
    <citation type="journal article" date="2004" name="Genome Res.">
        <title>The status, quality, and expansion of the NIH full-length cDNA project: the Mammalian Gene Collection (MGC).</title>
        <authorList>
            <consortium name="The MGC Project Team"/>
        </authorList>
    </citation>
    <scope>NUCLEOTIDE SEQUENCE [LARGE SCALE MRNA]</scope>
</reference>
<accession>B2RPK0</accession>
<keyword id="KW-0007">Acetylation</keyword>
<keyword id="KW-0158">Chromosome</keyword>
<keyword id="KW-0238">DNA-binding</keyword>
<keyword id="KW-0539">Nucleus</keyword>
<keyword id="KW-1267">Proteomics identification</keyword>
<keyword id="KW-1185">Reference proteome</keyword>
<keyword id="KW-0677">Repeat</keyword>
<feature type="chain" id="PRO_0000348425" description="High mobility group protein B1-like 1">
    <location>
        <begin position="1"/>
        <end position="211"/>
    </location>
</feature>
<feature type="DNA-binding region" description="HMG box 1" evidence="3">
    <location>
        <begin position="9"/>
        <end position="79"/>
    </location>
</feature>
<feature type="DNA-binding region" description="HMG box 2" evidence="3">
    <location>
        <begin position="95"/>
        <end position="163"/>
    </location>
</feature>
<feature type="region of interest" description="Disordered" evidence="4">
    <location>
        <begin position="71"/>
        <end position="96"/>
    </location>
</feature>
<feature type="region of interest" description="Disordered" evidence="4">
    <location>
        <begin position="161"/>
        <end position="211"/>
    </location>
</feature>
<feature type="compositionally biased region" description="Basic and acidic residues" evidence="4">
    <location>
        <begin position="83"/>
        <end position="94"/>
    </location>
</feature>
<feature type="compositionally biased region" description="Basic and acidic residues" evidence="4">
    <location>
        <begin position="166"/>
        <end position="179"/>
    </location>
</feature>
<feature type="compositionally biased region" description="Acidic residues" evidence="4">
    <location>
        <begin position="187"/>
        <end position="211"/>
    </location>
</feature>
<feature type="modified residue" description="N6-acetyllysine" evidence="2">
    <location>
        <position position="3"/>
    </location>
</feature>
<feature type="modified residue" description="N6-acetyllysine" evidence="2">
    <location>
        <position position="7"/>
    </location>
</feature>
<feature type="modified residue" description="N6-acetyllysine" evidence="2">
    <location>
        <position position="8"/>
    </location>
</feature>
<feature type="modified residue" description="N6-acetyllysine" evidence="2">
    <location>
        <position position="12"/>
    </location>
</feature>
<feature type="modified residue" description="N6-acetyllysine" evidence="2">
    <location>
        <position position="28"/>
    </location>
</feature>
<feature type="modified residue" description="N6-acetyllysine" evidence="2">
    <location>
        <position position="29"/>
    </location>
</feature>
<feature type="modified residue" description="N6-acetyllysine" evidence="2">
    <location>
        <position position="30"/>
    </location>
</feature>
<feature type="modified residue" description="N6-acetyllysine" evidence="2">
    <location>
        <position position="127"/>
    </location>
</feature>
<feature type="modified residue" description="N6-acetyllysine" evidence="2">
    <location>
        <position position="128"/>
    </location>
</feature>
<feature type="modified residue" description="N6-acetyllysine" evidence="2">
    <location>
        <position position="172"/>
    </location>
</feature>
<feature type="modified residue" description="N6-acetyllysine" evidence="2">
    <location>
        <position position="173"/>
    </location>
</feature>
<feature type="modified residue" description="N6-acetyllysine" evidence="2">
    <location>
        <position position="177"/>
    </location>
</feature>
<feature type="modified residue" description="N6-acetyllysine" evidence="2">
    <location>
        <position position="180"/>
    </location>
</feature>
<feature type="modified residue" description="N6-acetyllysine" evidence="2">
    <location>
        <position position="182"/>
    </location>
</feature>
<feature type="modified residue" description="N6-acetyllysine" evidence="2">
    <location>
        <position position="183"/>
    </location>
</feature>
<feature type="modified residue" description="N6-acetyllysine" evidence="2">
    <location>
        <position position="184"/>
    </location>
</feature>
<feature type="modified residue" description="N6-acetyllysine" evidence="2">
    <location>
        <position position="185"/>
    </location>
</feature>
<gene>
    <name type="primary">HMGB1P1</name>
    <name type="synonym">HMG1L1</name>
    <name type="synonym">HMGB1L1</name>
</gene>
<proteinExistence type="evidence at protein level"/>
<protein>
    <recommendedName>
        <fullName>High mobility group protein B1-like 1</fullName>
    </recommendedName>
    <alternativeName>
        <fullName>High mobility group protein 1-like 1</fullName>
        <shortName>HMG-1L1</shortName>
    </alternativeName>
</protein>
<comment type="function">
    <text evidence="1">Binds preferentially single-stranded DNA and unwinds double-stranded DNA.</text>
</comment>
<comment type="subcellular location">
    <subcellularLocation>
        <location evidence="3">Nucleus</location>
    </subcellularLocation>
    <subcellularLocation>
        <location evidence="1">Chromosome</location>
    </subcellularLocation>
</comment>
<comment type="similarity">
    <text evidence="5">Belongs to the HMGB family.</text>
</comment>
<dbReference type="EMBL" id="AL160176">
    <property type="status" value="NOT_ANNOTATED_CDS"/>
    <property type="molecule type" value="Genomic_DNA"/>
</dbReference>
<dbReference type="EMBL" id="BC137482">
    <property type="protein sequence ID" value="AAI37483.1"/>
    <property type="molecule type" value="mRNA"/>
</dbReference>
<dbReference type="EMBL" id="BC137483">
    <property type="protein sequence ID" value="AAI37484.1"/>
    <property type="molecule type" value="mRNA"/>
</dbReference>
<dbReference type="SMR" id="B2RPK0"/>
<dbReference type="FunCoup" id="B2RPK0">
    <property type="interactions" value="166"/>
</dbReference>
<dbReference type="IntAct" id="B2RPK0">
    <property type="interactions" value="10"/>
</dbReference>
<dbReference type="MINT" id="B2RPK0"/>
<dbReference type="MetOSite" id="B2RPK0"/>
<dbReference type="SwissPalm" id="B2RPK0"/>
<dbReference type="BioMuta" id="HGNC:4993"/>
<dbReference type="jPOST" id="B2RPK0"/>
<dbReference type="MassIVE" id="B2RPK0"/>
<dbReference type="PeptideAtlas" id="B2RPK0"/>
<dbReference type="ProteomicsDB" id="3446"/>
<dbReference type="Pumba" id="B2RPK0"/>
<dbReference type="TopDownProteomics" id="B2RPK0"/>
<dbReference type="Ensembl" id="ENST00000522557.2">
    <property type="protein sequence ID" value="ENSP00000508468.1"/>
    <property type="gene ID" value="ENSG00000124097.8"/>
</dbReference>
<dbReference type="AGR" id="HGNC:4993"/>
<dbReference type="GeneCards" id="HMGB1P1"/>
<dbReference type="HGNC" id="HGNC:4993">
    <property type="gene designation" value="HMGB1P1"/>
</dbReference>
<dbReference type="HPA" id="ENSG00000124097">
    <property type="expression patterns" value="Tissue enhanced (choroid)"/>
</dbReference>
<dbReference type="neXtProt" id="NX_B2RPK0"/>
<dbReference type="OpenTargets" id="ENSG00000124097"/>
<dbReference type="GeneTree" id="ENSGT00950000183120"/>
<dbReference type="InParanoid" id="B2RPK0"/>
<dbReference type="PAN-GO" id="B2RPK0">
    <property type="GO annotations" value="2 GO annotations based on evolutionary models"/>
</dbReference>
<dbReference type="PhylomeDB" id="B2RPK0"/>
<dbReference type="PathwayCommons" id="B2RPK0"/>
<dbReference type="ChiTaRS" id="HMGB1P1">
    <property type="organism name" value="human"/>
</dbReference>
<dbReference type="Pharos" id="B2RPK0">
    <property type="development level" value="Tdark"/>
</dbReference>
<dbReference type="Proteomes" id="UP000005640">
    <property type="component" value="Chromosome 20"/>
</dbReference>
<dbReference type="RNAct" id="B2RPK0">
    <property type="molecule type" value="protein"/>
</dbReference>
<dbReference type="GO" id="GO:0005694">
    <property type="term" value="C:chromosome"/>
    <property type="evidence" value="ECO:0007669"/>
    <property type="project" value="UniProtKB-SubCell"/>
</dbReference>
<dbReference type="GO" id="GO:0005634">
    <property type="term" value="C:nucleus"/>
    <property type="evidence" value="ECO:0007669"/>
    <property type="project" value="UniProtKB-SubCell"/>
</dbReference>
<dbReference type="GO" id="GO:0008301">
    <property type="term" value="F:DNA binding, bending"/>
    <property type="evidence" value="ECO:0000318"/>
    <property type="project" value="GO_Central"/>
</dbReference>
<dbReference type="GO" id="GO:0006357">
    <property type="term" value="P:regulation of transcription by RNA polymerase II"/>
    <property type="evidence" value="ECO:0000318"/>
    <property type="project" value="GO_Central"/>
</dbReference>
<dbReference type="CDD" id="cd21978">
    <property type="entry name" value="HMG-box_HMGB_rpt1"/>
    <property type="match status" value="1"/>
</dbReference>
<dbReference type="CDD" id="cd21979">
    <property type="entry name" value="HMG-box_HMGB_rpt2"/>
    <property type="match status" value="1"/>
</dbReference>
<dbReference type="FunFam" id="1.10.30.10:FF:000006">
    <property type="entry name" value="High mobility group protein B1"/>
    <property type="match status" value="1"/>
</dbReference>
<dbReference type="FunFam" id="1.10.30.10:FF:000015">
    <property type="entry name" value="high mobility group protein B1"/>
    <property type="match status" value="1"/>
</dbReference>
<dbReference type="Gene3D" id="1.10.30.10">
    <property type="entry name" value="High mobility group box domain"/>
    <property type="match status" value="2"/>
</dbReference>
<dbReference type="InterPro" id="IPR009071">
    <property type="entry name" value="HMG_box_dom"/>
</dbReference>
<dbReference type="InterPro" id="IPR036910">
    <property type="entry name" value="HMG_box_dom_sf"/>
</dbReference>
<dbReference type="InterPro" id="IPR050342">
    <property type="entry name" value="HMGB"/>
</dbReference>
<dbReference type="PANTHER" id="PTHR48112:SF12">
    <property type="entry name" value="HIGH MOBILITY GROUP PROTEIN B1-LIKE 1-RELATED"/>
    <property type="match status" value="1"/>
</dbReference>
<dbReference type="PANTHER" id="PTHR48112">
    <property type="entry name" value="HIGH MOBILITY GROUP PROTEIN DSP1"/>
    <property type="match status" value="1"/>
</dbReference>
<dbReference type="Pfam" id="PF00505">
    <property type="entry name" value="HMG_box"/>
    <property type="match status" value="1"/>
</dbReference>
<dbReference type="Pfam" id="PF09011">
    <property type="entry name" value="HMG_box_2"/>
    <property type="match status" value="1"/>
</dbReference>
<dbReference type="PRINTS" id="PR00886">
    <property type="entry name" value="HIGHMOBLTY12"/>
</dbReference>
<dbReference type="SMART" id="SM00398">
    <property type="entry name" value="HMG"/>
    <property type="match status" value="2"/>
</dbReference>
<dbReference type="SUPFAM" id="SSF47095">
    <property type="entry name" value="HMG-box"/>
    <property type="match status" value="2"/>
</dbReference>
<dbReference type="PROSITE" id="PS50118">
    <property type="entry name" value="HMG_BOX_2"/>
    <property type="match status" value="2"/>
</dbReference>